<name>PURQ_METM5</name>
<organism>
    <name type="scientific">Methanococcus maripaludis (strain C5 / ATCC BAA-1333)</name>
    <dbReference type="NCBI Taxonomy" id="402880"/>
    <lineage>
        <taxon>Archaea</taxon>
        <taxon>Methanobacteriati</taxon>
        <taxon>Methanobacteriota</taxon>
        <taxon>Methanomada group</taxon>
        <taxon>Methanococci</taxon>
        <taxon>Methanococcales</taxon>
        <taxon>Methanococcaceae</taxon>
        <taxon>Methanococcus</taxon>
    </lineage>
</organism>
<gene>
    <name evidence="1" type="primary">purQ</name>
    <name type="ordered locus">MmarC5_1497</name>
</gene>
<evidence type="ECO:0000255" key="1">
    <source>
        <dbReference type="HAMAP-Rule" id="MF_00421"/>
    </source>
</evidence>
<protein>
    <recommendedName>
        <fullName evidence="1">Phosphoribosylformylglycinamidine synthase subunit PurQ</fullName>
        <shortName evidence="1">FGAM synthase</shortName>
        <ecNumber evidence="1">6.3.5.3</ecNumber>
    </recommendedName>
    <alternativeName>
        <fullName evidence="1">Formylglycinamide ribonucleotide amidotransferase subunit I</fullName>
        <shortName evidence="1">FGAR amidotransferase I</shortName>
        <shortName evidence="1">FGAR-AT I</shortName>
    </alternativeName>
    <alternativeName>
        <fullName evidence="1">Glutaminase PurQ</fullName>
        <ecNumber evidence="1">3.5.1.2</ecNumber>
    </alternativeName>
    <alternativeName>
        <fullName evidence="1">Phosphoribosylformylglycinamidine synthase subunit I</fullName>
    </alternativeName>
</protein>
<reference key="1">
    <citation type="submission" date="2007-03" db="EMBL/GenBank/DDBJ databases">
        <title>Complete sequence of chromosome of Methanococcus maripaludis C5.</title>
        <authorList>
            <consortium name="US DOE Joint Genome Institute"/>
            <person name="Copeland A."/>
            <person name="Lucas S."/>
            <person name="Lapidus A."/>
            <person name="Barry K."/>
            <person name="Glavina del Rio T."/>
            <person name="Dalin E."/>
            <person name="Tice H."/>
            <person name="Pitluck S."/>
            <person name="Chertkov O."/>
            <person name="Brettin T."/>
            <person name="Bruce D."/>
            <person name="Han C."/>
            <person name="Detter J.C."/>
            <person name="Schmutz J."/>
            <person name="Larimer F."/>
            <person name="Land M."/>
            <person name="Hauser L."/>
            <person name="Kyrpides N."/>
            <person name="Mikhailova N."/>
            <person name="Sieprawska-Lupa M."/>
            <person name="Whitman W.B."/>
            <person name="Richardson P."/>
        </authorList>
    </citation>
    <scope>NUCLEOTIDE SEQUENCE [LARGE SCALE GENOMIC DNA]</scope>
    <source>
        <strain>C5 / ATCC BAA-1333</strain>
    </source>
</reference>
<accession>A4G010</accession>
<keyword id="KW-0067">ATP-binding</keyword>
<keyword id="KW-0963">Cytoplasm</keyword>
<keyword id="KW-0315">Glutamine amidotransferase</keyword>
<keyword id="KW-0378">Hydrolase</keyword>
<keyword id="KW-0436">Ligase</keyword>
<keyword id="KW-0547">Nucleotide-binding</keyword>
<keyword id="KW-0658">Purine biosynthesis</keyword>
<proteinExistence type="inferred from homology"/>
<sequence>MVPKVLVMSGYGINCETETAHAFQKAGAETDIVHINDLIAGKKKMADYEIIMFPGGFSYGDDTGSGNAFANKIKNNLFDDLKEFINSGKLILGICNGFQVMTNLGLFALPSTDYGERISALEANTNNRYECRWVHVKENDSICVFTKGITITHVPIAHGEGRFYCDEKTYFELKENKQIVFSYCDSEGNSANQEYPLNPNGAYYDIAGICDKTGRIMGLMPHPERSLYSISEPEYQLKKEIAKRNREIIPEFIESNLQIFKNAVEYFNK</sequence>
<feature type="chain" id="PRO_1000124127" description="Phosphoribosylformylglycinamidine synthase subunit PurQ">
    <location>
        <begin position="1"/>
        <end position="269"/>
    </location>
</feature>
<feature type="domain" description="Glutamine amidotransferase type-1" evidence="1">
    <location>
        <begin position="5"/>
        <end position="262"/>
    </location>
</feature>
<feature type="active site" description="Nucleophile" evidence="1">
    <location>
        <position position="95"/>
    </location>
</feature>
<feature type="active site" evidence="1">
    <location>
        <position position="222"/>
    </location>
</feature>
<feature type="active site" evidence="1">
    <location>
        <position position="224"/>
    </location>
</feature>
<feature type="active site" evidence="1">
    <location>
        <position position="232"/>
    </location>
</feature>
<dbReference type="EC" id="6.3.5.3" evidence="1"/>
<dbReference type="EC" id="3.5.1.2" evidence="1"/>
<dbReference type="EMBL" id="CP000609">
    <property type="protein sequence ID" value="ABO35794.1"/>
    <property type="molecule type" value="Genomic_DNA"/>
</dbReference>
<dbReference type="RefSeq" id="WP_011869243.1">
    <property type="nucleotide sequence ID" value="NC_009135.1"/>
</dbReference>
<dbReference type="SMR" id="A4G010"/>
<dbReference type="STRING" id="402880.MmarC5_1497"/>
<dbReference type="GeneID" id="4927808"/>
<dbReference type="KEGG" id="mmq:MmarC5_1497"/>
<dbReference type="eggNOG" id="arCOG00102">
    <property type="taxonomic scope" value="Archaea"/>
</dbReference>
<dbReference type="HOGENOM" id="CLU_001031_3_0_2"/>
<dbReference type="OrthoDB" id="6486at2157"/>
<dbReference type="UniPathway" id="UPA00074">
    <property type="reaction ID" value="UER00128"/>
</dbReference>
<dbReference type="Proteomes" id="UP000000253">
    <property type="component" value="Chromosome"/>
</dbReference>
<dbReference type="GO" id="GO:0005737">
    <property type="term" value="C:cytoplasm"/>
    <property type="evidence" value="ECO:0007669"/>
    <property type="project" value="UniProtKB-SubCell"/>
</dbReference>
<dbReference type="GO" id="GO:0005524">
    <property type="term" value="F:ATP binding"/>
    <property type="evidence" value="ECO:0007669"/>
    <property type="project" value="UniProtKB-KW"/>
</dbReference>
<dbReference type="GO" id="GO:0004359">
    <property type="term" value="F:glutaminase activity"/>
    <property type="evidence" value="ECO:0007669"/>
    <property type="project" value="UniProtKB-EC"/>
</dbReference>
<dbReference type="GO" id="GO:0004642">
    <property type="term" value="F:phosphoribosylformylglycinamidine synthase activity"/>
    <property type="evidence" value="ECO:0007669"/>
    <property type="project" value="UniProtKB-UniRule"/>
</dbReference>
<dbReference type="GO" id="GO:0006189">
    <property type="term" value="P:'de novo' IMP biosynthetic process"/>
    <property type="evidence" value="ECO:0007669"/>
    <property type="project" value="UniProtKB-UniRule"/>
</dbReference>
<dbReference type="CDD" id="cd01740">
    <property type="entry name" value="GATase1_FGAR_AT"/>
    <property type="match status" value="1"/>
</dbReference>
<dbReference type="Gene3D" id="3.40.50.880">
    <property type="match status" value="1"/>
</dbReference>
<dbReference type="HAMAP" id="MF_00421">
    <property type="entry name" value="PurQ"/>
    <property type="match status" value="1"/>
</dbReference>
<dbReference type="InterPro" id="IPR029062">
    <property type="entry name" value="Class_I_gatase-like"/>
</dbReference>
<dbReference type="InterPro" id="IPR010075">
    <property type="entry name" value="PRibForGlyAmidine_synth_PurQ"/>
</dbReference>
<dbReference type="NCBIfam" id="TIGR01737">
    <property type="entry name" value="FGAM_synth_I"/>
    <property type="match status" value="1"/>
</dbReference>
<dbReference type="PANTHER" id="PTHR10099">
    <property type="entry name" value="PHOSPHORIBOSYLFORMYLGLYCINAMIDINE SYNTHASE"/>
    <property type="match status" value="1"/>
</dbReference>
<dbReference type="PANTHER" id="PTHR10099:SF1">
    <property type="entry name" value="PHOSPHORIBOSYLFORMYLGLYCINAMIDINE SYNTHASE"/>
    <property type="match status" value="1"/>
</dbReference>
<dbReference type="Pfam" id="PF13507">
    <property type="entry name" value="GATase_5"/>
    <property type="match status" value="1"/>
</dbReference>
<dbReference type="PIRSF" id="PIRSF001586">
    <property type="entry name" value="FGAM_synth_I"/>
    <property type="match status" value="1"/>
</dbReference>
<dbReference type="SMART" id="SM01211">
    <property type="entry name" value="GATase_5"/>
    <property type="match status" value="1"/>
</dbReference>
<dbReference type="SUPFAM" id="SSF52317">
    <property type="entry name" value="Class I glutamine amidotransferase-like"/>
    <property type="match status" value="1"/>
</dbReference>
<dbReference type="PROSITE" id="PS51273">
    <property type="entry name" value="GATASE_TYPE_1"/>
    <property type="match status" value="1"/>
</dbReference>
<comment type="function">
    <text evidence="1">Part of the phosphoribosylformylglycinamidine synthase complex involved in the purines biosynthetic pathway. Catalyzes the ATP-dependent conversion of formylglycinamide ribonucleotide (FGAR) and glutamine to yield formylglycinamidine ribonucleotide (FGAM) and glutamate. The FGAM synthase complex is composed of three subunits. PurQ produces an ammonia molecule by converting glutamine to glutamate. PurL transfers the ammonia molecule to FGAR to form FGAM in an ATP-dependent manner. PurS interacts with PurQ and PurL and is thought to assist in the transfer of the ammonia molecule from PurQ to PurL.</text>
</comment>
<comment type="catalytic activity">
    <reaction evidence="1">
        <text>N(2)-formyl-N(1)-(5-phospho-beta-D-ribosyl)glycinamide + L-glutamine + ATP + H2O = 2-formamido-N(1)-(5-O-phospho-beta-D-ribosyl)acetamidine + L-glutamate + ADP + phosphate + H(+)</text>
        <dbReference type="Rhea" id="RHEA:17129"/>
        <dbReference type="ChEBI" id="CHEBI:15377"/>
        <dbReference type="ChEBI" id="CHEBI:15378"/>
        <dbReference type="ChEBI" id="CHEBI:29985"/>
        <dbReference type="ChEBI" id="CHEBI:30616"/>
        <dbReference type="ChEBI" id="CHEBI:43474"/>
        <dbReference type="ChEBI" id="CHEBI:58359"/>
        <dbReference type="ChEBI" id="CHEBI:147286"/>
        <dbReference type="ChEBI" id="CHEBI:147287"/>
        <dbReference type="ChEBI" id="CHEBI:456216"/>
        <dbReference type="EC" id="6.3.5.3"/>
    </reaction>
</comment>
<comment type="catalytic activity">
    <reaction evidence="1">
        <text>L-glutamine + H2O = L-glutamate + NH4(+)</text>
        <dbReference type="Rhea" id="RHEA:15889"/>
        <dbReference type="ChEBI" id="CHEBI:15377"/>
        <dbReference type="ChEBI" id="CHEBI:28938"/>
        <dbReference type="ChEBI" id="CHEBI:29985"/>
        <dbReference type="ChEBI" id="CHEBI:58359"/>
        <dbReference type="EC" id="3.5.1.2"/>
    </reaction>
</comment>
<comment type="pathway">
    <text evidence="1">Purine metabolism; IMP biosynthesis via de novo pathway; 5-amino-1-(5-phospho-D-ribosyl)imidazole from N(2)-formyl-N(1)-(5-phospho-D-ribosyl)glycinamide: step 1/2.</text>
</comment>
<comment type="subunit">
    <text evidence="1">Part of the FGAM synthase complex composed of 1 PurL, 1 PurQ and 2 PurS subunits.</text>
</comment>
<comment type="subcellular location">
    <subcellularLocation>
        <location evidence="1">Cytoplasm</location>
    </subcellularLocation>
</comment>